<name>S100B_HUMAN</name>
<dbReference type="EMBL" id="M59488">
    <property type="protein sequence ID" value="AAA60367.1"/>
    <property type="molecule type" value="Genomic_DNA"/>
</dbReference>
<dbReference type="EMBL" id="M59487">
    <property type="protein sequence ID" value="AAA60367.1"/>
    <property type="status" value="JOINED"/>
    <property type="molecule type" value="Genomic_DNA"/>
</dbReference>
<dbReference type="EMBL" id="CR542123">
    <property type="protein sequence ID" value="CAG46920.1"/>
    <property type="molecule type" value="mRNA"/>
</dbReference>
<dbReference type="EMBL" id="AP000339">
    <property type="status" value="NOT_ANNOTATED_CDS"/>
    <property type="molecule type" value="Genomic_DNA"/>
</dbReference>
<dbReference type="EMBL" id="CH471079">
    <property type="protein sequence ID" value="EAX09267.1"/>
    <property type="molecule type" value="Genomic_DNA"/>
</dbReference>
<dbReference type="EMBL" id="CH471079">
    <property type="protein sequence ID" value="EAX09268.1"/>
    <property type="molecule type" value="Genomic_DNA"/>
</dbReference>
<dbReference type="EMBL" id="CH471079">
    <property type="protein sequence ID" value="EAX09269.1"/>
    <property type="molecule type" value="Genomic_DNA"/>
</dbReference>
<dbReference type="EMBL" id="CH471079">
    <property type="protein sequence ID" value="EAX09270.1"/>
    <property type="molecule type" value="Genomic_DNA"/>
</dbReference>
<dbReference type="EMBL" id="BC001766">
    <property type="protein sequence ID" value="AAH01766.1"/>
    <property type="molecule type" value="mRNA"/>
</dbReference>
<dbReference type="CCDS" id="CCDS13736.1"/>
<dbReference type="PIR" id="A38364">
    <property type="entry name" value="BCHUIB"/>
</dbReference>
<dbReference type="RefSeq" id="NP_006263.1">
    <property type="nucleotide sequence ID" value="NM_006272.3"/>
</dbReference>
<dbReference type="RefSeq" id="XP_016883913.1">
    <property type="nucleotide sequence ID" value="XM_017028424.3"/>
</dbReference>
<dbReference type="RefSeq" id="XP_054180712.1">
    <property type="nucleotide sequence ID" value="XM_054324737.1"/>
</dbReference>
<dbReference type="PDB" id="1MQ1">
    <property type="method" value="NMR"/>
    <property type="chains" value="A/B=2-92"/>
</dbReference>
<dbReference type="PDB" id="1UWO">
    <property type="method" value="NMR"/>
    <property type="chains" value="A/B=2-92"/>
</dbReference>
<dbReference type="PDB" id="2H61">
    <property type="method" value="X-ray"/>
    <property type="resolution" value="1.90 A"/>
    <property type="chains" value="A/B/C/D/E/F/G/H=1-92"/>
</dbReference>
<dbReference type="PDB" id="2M49">
    <property type="method" value="NMR"/>
    <property type="chains" value="B/D=2-92"/>
</dbReference>
<dbReference type="PDB" id="2PRU">
    <property type="method" value="NMR"/>
    <property type="chains" value="A/B=2-92"/>
</dbReference>
<dbReference type="PDB" id="3CZT">
    <property type="method" value="X-ray"/>
    <property type="resolution" value="1.40 A"/>
    <property type="chains" value="X=1-92"/>
</dbReference>
<dbReference type="PDB" id="3D0Y">
    <property type="method" value="X-ray"/>
    <property type="resolution" value="1.50 A"/>
    <property type="chains" value="A/B=1-92"/>
</dbReference>
<dbReference type="PDB" id="3D10">
    <property type="method" value="X-ray"/>
    <property type="resolution" value="1.65 A"/>
    <property type="chains" value="A/B=1-92"/>
</dbReference>
<dbReference type="PDB" id="3HCM">
    <property type="method" value="X-ray"/>
    <property type="resolution" value="2.00 A"/>
    <property type="chains" value="A/B=1-92"/>
</dbReference>
<dbReference type="PDB" id="4XYN">
    <property type="method" value="X-ray"/>
    <property type="resolution" value="2.55 A"/>
    <property type="chains" value="A/B/C/D=1-92"/>
</dbReference>
<dbReference type="PDB" id="5CSF">
    <property type="method" value="X-ray"/>
    <property type="resolution" value="2.40 A"/>
    <property type="chains" value="A/B=1-92"/>
</dbReference>
<dbReference type="PDB" id="5CSI">
    <property type="method" value="X-ray"/>
    <property type="resolution" value="2.13 A"/>
    <property type="chains" value="A/B=1-92"/>
</dbReference>
<dbReference type="PDB" id="5CSJ">
    <property type="method" value="X-ray"/>
    <property type="resolution" value="2.70 A"/>
    <property type="chains" value="A/B=1-92"/>
</dbReference>
<dbReference type="PDB" id="5CSN">
    <property type="method" value="X-ray"/>
    <property type="resolution" value="2.95 A"/>
    <property type="chains" value="A/B=1-92"/>
</dbReference>
<dbReference type="PDB" id="5D7F">
    <property type="method" value="X-ray"/>
    <property type="resolution" value="1.30 A"/>
    <property type="chains" value="A/B=1-92"/>
</dbReference>
<dbReference type="PDBsum" id="1MQ1"/>
<dbReference type="PDBsum" id="1UWO"/>
<dbReference type="PDBsum" id="2H61"/>
<dbReference type="PDBsum" id="2M49"/>
<dbReference type="PDBsum" id="2PRU"/>
<dbReference type="PDBsum" id="3CZT"/>
<dbReference type="PDBsum" id="3D0Y"/>
<dbReference type="PDBsum" id="3D10"/>
<dbReference type="PDBsum" id="3HCM"/>
<dbReference type="PDBsum" id="4XYN"/>
<dbReference type="PDBsum" id="5CSF"/>
<dbReference type="PDBsum" id="5CSI"/>
<dbReference type="PDBsum" id="5CSJ"/>
<dbReference type="PDBsum" id="5CSN"/>
<dbReference type="PDBsum" id="5D7F"/>
<dbReference type="BMRB" id="P04271"/>
<dbReference type="SMR" id="P04271"/>
<dbReference type="BioGRID" id="112193">
    <property type="interactions" value="182"/>
</dbReference>
<dbReference type="FunCoup" id="P04271">
    <property type="interactions" value="206"/>
</dbReference>
<dbReference type="IntAct" id="P04271">
    <property type="interactions" value="177"/>
</dbReference>
<dbReference type="MINT" id="P04271"/>
<dbReference type="STRING" id="9606.ENSP00000291700"/>
<dbReference type="BindingDB" id="P04271"/>
<dbReference type="ChEMBL" id="CHEMBL4300"/>
<dbReference type="DrugBank" id="DB06941">
    <property type="generic name" value="(Z)-2-[2-(4-methylpiperazin-1-yl)benzyl]diazenecarbothioamide"/>
</dbReference>
<dbReference type="DrugBank" id="DB07004">
    <property type="generic name" value="2-[(5-hex-1-yn-1-ylfuran-2-yl)carbonyl]-N-methylhydrazinecarbothioamide"/>
</dbReference>
<dbReference type="DrugBank" id="DB05343">
    <property type="generic name" value="Arundic acid"/>
</dbReference>
<dbReference type="DrugBank" id="DB01373">
    <property type="generic name" value="Calcium"/>
</dbReference>
<dbReference type="DrugBank" id="DB11093">
    <property type="generic name" value="Calcium citrate"/>
</dbReference>
<dbReference type="DrugBank" id="DB11348">
    <property type="generic name" value="Calcium Phosphate"/>
</dbReference>
<dbReference type="DrugBank" id="DB14481">
    <property type="generic name" value="Calcium phosphate dihydrate"/>
</dbReference>
<dbReference type="DrugBank" id="DB04464">
    <property type="generic name" value="N-Formylmethionine"/>
</dbReference>
<dbReference type="DrugBank" id="DB00768">
    <property type="generic name" value="Olopatadine"/>
</dbReference>
<dbReference type="DrugCentral" id="P04271"/>
<dbReference type="TCDB" id="8.A.81.1.4">
    <property type="family name" value="the s100 calcium-binding protein (s100) family"/>
</dbReference>
<dbReference type="iPTMnet" id="P04271"/>
<dbReference type="PhosphoSitePlus" id="P04271"/>
<dbReference type="BioMuta" id="S100B"/>
<dbReference type="DMDM" id="134138"/>
<dbReference type="CPTAC" id="CPTAC-1454"/>
<dbReference type="CPTAC" id="CPTAC-1455"/>
<dbReference type="MassIVE" id="P04271"/>
<dbReference type="PaxDb" id="9606-ENSP00000291700"/>
<dbReference type="PeptideAtlas" id="P04271"/>
<dbReference type="ProteomicsDB" id="51695"/>
<dbReference type="TopDownProteomics" id="P04271"/>
<dbReference type="ABCD" id="P04271">
    <property type="antibodies" value="1 sequenced antibody"/>
</dbReference>
<dbReference type="Antibodypedia" id="3474">
    <property type="antibodies" value="1867 antibodies from 47 providers"/>
</dbReference>
<dbReference type="DNASU" id="6285"/>
<dbReference type="Ensembl" id="ENST00000291700.9">
    <property type="protein sequence ID" value="ENSP00000291700.4"/>
    <property type="gene ID" value="ENSG00000160307.10"/>
</dbReference>
<dbReference type="Ensembl" id="ENST00000397648.1">
    <property type="protein sequence ID" value="ENSP00000380769.1"/>
    <property type="gene ID" value="ENSG00000160307.10"/>
</dbReference>
<dbReference type="GeneID" id="6285"/>
<dbReference type="KEGG" id="hsa:6285"/>
<dbReference type="MANE-Select" id="ENST00000291700.9">
    <property type="protein sequence ID" value="ENSP00000291700.4"/>
    <property type="RefSeq nucleotide sequence ID" value="NM_006272.3"/>
    <property type="RefSeq protein sequence ID" value="NP_006263.1"/>
</dbReference>
<dbReference type="UCSC" id="uc002zju.2">
    <property type="organism name" value="human"/>
</dbReference>
<dbReference type="AGR" id="HGNC:10500"/>
<dbReference type="CTD" id="6285"/>
<dbReference type="DisGeNET" id="6285"/>
<dbReference type="GeneCards" id="S100B"/>
<dbReference type="HGNC" id="HGNC:10500">
    <property type="gene designation" value="S100B"/>
</dbReference>
<dbReference type="HPA" id="ENSG00000160307">
    <property type="expression patterns" value="Tissue enriched (brain)"/>
</dbReference>
<dbReference type="MIM" id="176990">
    <property type="type" value="gene"/>
</dbReference>
<dbReference type="neXtProt" id="NX_P04271"/>
<dbReference type="OpenTargets" id="ENSG00000160307"/>
<dbReference type="PharmGKB" id="PA34912"/>
<dbReference type="VEuPathDB" id="HostDB:ENSG00000160307"/>
<dbReference type="eggNOG" id="ENOG502S4HJ">
    <property type="taxonomic scope" value="Eukaryota"/>
</dbReference>
<dbReference type="GeneTree" id="ENSGT00940000161997"/>
<dbReference type="HOGENOM" id="CLU_138624_2_0_1"/>
<dbReference type="InParanoid" id="P04271"/>
<dbReference type="OMA" id="TACCHEF"/>
<dbReference type="OrthoDB" id="9903855at2759"/>
<dbReference type="PAN-GO" id="P04271">
    <property type="GO annotations" value="9 GO annotations based on evolutionary models"/>
</dbReference>
<dbReference type="PhylomeDB" id="P04271"/>
<dbReference type="TreeFam" id="TF332727"/>
<dbReference type="PathwayCommons" id="P04271"/>
<dbReference type="Reactome" id="R-HSA-1251985">
    <property type="pathway name" value="Nuclear signaling by ERBB4"/>
</dbReference>
<dbReference type="Reactome" id="R-HSA-445989">
    <property type="pathway name" value="TAK1-dependent IKK and NF-kappa-B activation"/>
</dbReference>
<dbReference type="Reactome" id="R-HSA-879415">
    <property type="pathway name" value="Advanced glycosylation endproduct receptor signaling"/>
</dbReference>
<dbReference type="Reactome" id="R-HSA-933542">
    <property type="pathway name" value="TRAF6 mediated NF-kB activation"/>
</dbReference>
<dbReference type="SignaLink" id="P04271"/>
<dbReference type="SIGNOR" id="P04271"/>
<dbReference type="BioGRID-ORCS" id="6285">
    <property type="hits" value="13 hits in 1154 CRISPR screens"/>
</dbReference>
<dbReference type="ChiTaRS" id="S100B">
    <property type="organism name" value="human"/>
</dbReference>
<dbReference type="EvolutionaryTrace" id="P04271"/>
<dbReference type="GeneWiki" id="S100B"/>
<dbReference type="GenomeRNAi" id="6285"/>
<dbReference type="Pharos" id="P04271">
    <property type="development level" value="Tchem"/>
</dbReference>
<dbReference type="PRO" id="PR:P04271"/>
<dbReference type="Proteomes" id="UP000005640">
    <property type="component" value="Chromosome 21"/>
</dbReference>
<dbReference type="RNAct" id="P04271">
    <property type="molecule type" value="protein"/>
</dbReference>
<dbReference type="Bgee" id="ENSG00000160307">
    <property type="expression patterns" value="Expressed in C1 segment of cervical spinal cord and 159 other cell types or tissues"/>
</dbReference>
<dbReference type="ExpressionAtlas" id="P04271">
    <property type="expression patterns" value="baseline and differential"/>
</dbReference>
<dbReference type="GO" id="GO:0036064">
    <property type="term" value="C:ciliary basal body"/>
    <property type="evidence" value="ECO:0000314"/>
    <property type="project" value="HPA"/>
</dbReference>
<dbReference type="GO" id="GO:0005929">
    <property type="term" value="C:cilium"/>
    <property type="evidence" value="ECO:0000314"/>
    <property type="project" value="HPA"/>
</dbReference>
<dbReference type="GO" id="GO:0005737">
    <property type="term" value="C:cytoplasm"/>
    <property type="evidence" value="ECO:0000314"/>
    <property type="project" value="UniProtKB"/>
</dbReference>
<dbReference type="GO" id="GO:0005829">
    <property type="term" value="C:cytosol"/>
    <property type="evidence" value="ECO:0000314"/>
    <property type="project" value="HPA"/>
</dbReference>
<dbReference type="GO" id="GO:0005576">
    <property type="term" value="C:extracellular region"/>
    <property type="evidence" value="ECO:0000250"/>
    <property type="project" value="UniProtKB"/>
</dbReference>
<dbReference type="GO" id="GO:0005615">
    <property type="term" value="C:extracellular space"/>
    <property type="evidence" value="ECO:0000318"/>
    <property type="project" value="GO_Central"/>
</dbReference>
<dbReference type="GO" id="GO:0043231">
    <property type="term" value="C:intracellular membrane-bounded organelle"/>
    <property type="evidence" value="ECO:0000314"/>
    <property type="project" value="HPA"/>
</dbReference>
<dbReference type="GO" id="GO:0015630">
    <property type="term" value="C:microtubule cytoskeleton"/>
    <property type="evidence" value="ECO:0000314"/>
    <property type="project" value="HPA"/>
</dbReference>
<dbReference type="GO" id="GO:0043025">
    <property type="term" value="C:neuronal cell body"/>
    <property type="evidence" value="ECO:0007669"/>
    <property type="project" value="Ensembl"/>
</dbReference>
<dbReference type="GO" id="GO:0005654">
    <property type="term" value="C:nucleoplasm"/>
    <property type="evidence" value="ECO:0000314"/>
    <property type="project" value="HPA"/>
</dbReference>
<dbReference type="GO" id="GO:0005634">
    <property type="term" value="C:nucleus"/>
    <property type="evidence" value="ECO:0000314"/>
    <property type="project" value="UniProtKB"/>
</dbReference>
<dbReference type="GO" id="GO:0048471">
    <property type="term" value="C:perinuclear region of cytoplasm"/>
    <property type="evidence" value="ECO:0000314"/>
    <property type="project" value="UniProtKB"/>
</dbReference>
<dbReference type="GO" id="GO:0001726">
    <property type="term" value="C:ruffle"/>
    <property type="evidence" value="ECO:0000314"/>
    <property type="project" value="UniProtKB"/>
</dbReference>
<dbReference type="GO" id="GO:0005509">
    <property type="term" value="F:calcium ion binding"/>
    <property type="evidence" value="ECO:0000314"/>
    <property type="project" value="UniProtKB"/>
</dbReference>
<dbReference type="GO" id="GO:0048306">
    <property type="term" value="F:calcium-dependent protein binding"/>
    <property type="evidence" value="ECO:0000314"/>
    <property type="project" value="UniProtKB"/>
</dbReference>
<dbReference type="GO" id="GO:0042802">
    <property type="term" value="F:identical protein binding"/>
    <property type="evidence" value="ECO:0000353"/>
    <property type="project" value="IntAct"/>
</dbReference>
<dbReference type="GO" id="GO:0042803">
    <property type="term" value="F:protein homodimerization activity"/>
    <property type="evidence" value="ECO:0000314"/>
    <property type="project" value="UniProtKB"/>
</dbReference>
<dbReference type="GO" id="GO:0050786">
    <property type="term" value="F:RAGE receptor binding"/>
    <property type="evidence" value="ECO:0000353"/>
    <property type="project" value="UniProtKB"/>
</dbReference>
<dbReference type="GO" id="GO:0044548">
    <property type="term" value="F:S100 protein binding"/>
    <property type="evidence" value="ECO:0000353"/>
    <property type="project" value="UniProtKB"/>
</dbReference>
<dbReference type="GO" id="GO:0048156">
    <property type="term" value="F:tau protein binding"/>
    <property type="evidence" value="ECO:0000250"/>
    <property type="project" value="UniProtKB"/>
</dbReference>
<dbReference type="GO" id="GO:0008270">
    <property type="term" value="F:zinc ion binding"/>
    <property type="evidence" value="ECO:0000314"/>
    <property type="project" value="UniProtKB"/>
</dbReference>
<dbReference type="GO" id="GO:1990845">
    <property type="term" value="P:adaptive thermogenesis"/>
    <property type="evidence" value="ECO:0000250"/>
    <property type="project" value="UniProtKB"/>
</dbReference>
<dbReference type="GO" id="GO:0048708">
    <property type="term" value="P:astrocyte differentiation"/>
    <property type="evidence" value="ECO:0007669"/>
    <property type="project" value="Ensembl"/>
</dbReference>
<dbReference type="GO" id="GO:0007409">
    <property type="term" value="P:axonogenesis"/>
    <property type="evidence" value="ECO:0000304"/>
    <property type="project" value="ProtInc"/>
</dbReference>
<dbReference type="GO" id="GO:0007155">
    <property type="term" value="P:cell adhesion"/>
    <property type="evidence" value="ECO:0007669"/>
    <property type="project" value="UniProtKB-KW"/>
</dbReference>
<dbReference type="GO" id="GO:0071456">
    <property type="term" value="P:cellular response to hypoxia"/>
    <property type="evidence" value="ECO:0007669"/>
    <property type="project" value="Ensembl"/>
</dbReference>
<dbReference type="GO" id="GO:0007417">
    <property type="term" value="P:central nervous system development"/>
    <property type="evidence" value="ECO:0000304"/>
    <property type="project" value="ProtInc"/>
</dbReference>
<dbReference type="GO" id="GO:0007611">
    <property type="term" value="P:learning or memory"/>
    <property type="evidence" value="ECO:0000250"/>
    <property type="project" value="UniProtKB"/>
</dbReference>
<dbReference type="GO" id="GO:0060291">
    <property type="term" value="P:long-term synaptic potentiation"/>
    <property type="evidence" value="ECO:0007669"/>
    <property type="project" value="Ensembl"/>
</dbReference>
<dbReference type="GO" id="GO:0007613">
    <property type="term" value="P:memory"/>
    <property type="evidence" value="ECO:0007669"/>
    <property type="project" value="Ensembl"/>
</dbReference>
<dbReference type="GO" id="GO:2001015">
    <property type="term" value="P:negative regulation of skeletal muscle cell differentiation"/>
    <property type="evidence" value="ECO:0007669"/>
    <property type="project" value="Ensembl"/>
</dbReference>
<dbReference type="GO" id="GO:0043065">
    <property type="term" value="P:positive regulation of apoptotic process"/>
    <property type="evidence" value="ECO:0007669"/>
    <property type="project" value="Ensembl"/>
</dbReference>
<dbReference type="GO" id="GO:0043123">
    <property type="term" value="P:positive regulation of canonical NF-kappaB signal transduction"/>
    <property type="evidence" value="ECO:0000314"/>
    <property type="project" value="UniProtKB"/>
</dbReference>
<dbReference type="GO" id="GO:0008284">
    <property type="term" value="P:positive regulation of cell population proliferation"/>
    <property type="evidence" value="ECO:0000318"/>
    <property type="project" value="GO_Central"/>
</dbReference>
<dbReference type="GO" id="GO:0031643">
    <property type="term" value="P:positive regulation of myelination"/>
    <property type="evidence" value="ECO:0007669"/>
    <property type="project" value="Ensembl"/>
</dbReference>
<dbReference type="GO" id="GO:0045666">
    <property type="term" value="P:positive regulation of neuron differentiation"/>
    <property type="evidence" value="ECO:0007669"/>
    <property type="project" value="Ensembl"/>
</dbReference>
<dbReference type="GO" id="GO:0008360">
    <property type="term" value="P:regulation of cell shape"/>
    <property type="evidence" value="ECO:0007669"/>
    <property type="project" value="Ensembl"/>
</dbReference>
<dbReference type="GO" id="GO:0048168">
    <property type="term" value="P:regulation of neuronal synaptic plasticity"/>
    <property type="evidence" value="ECO:0007669"/>
    <property type="project" value="Ensembl"/>
</dbReference>
<dbReference type="GO" id="GO:0072347">
    <property type="term" value="P:response to anesthetic"/>
    <property type="evidence" value="ECO:0007669"/>
    <property type="project" value="Ensembl"/>
</dbReference>
<dbReference type="GO" id="GO:0051384">
    <property type="term" value="P:response to glucocorticoid"/>
    <property type="evidence" value="ECO:0007669"/>
    <property type="project" value="Ensembl"/>
</dbReference>
<dbReference type="GO" id="GO:0051597">
    <property type="term" value="P:response to methylmercury"/>
    <property type="evidence" value="ECO:0007669"/>
    <property type="project" value="Ensembl"/>
</dbReference>
<dbReference type="GO" id="GO:0097490">
    <property type="term" value="P:sympathetic neuron projection extension"/>
    <property type="evidence" value="ECO:0000250"/>
    <property type="project" value="UniProtKB"/>
</dbReference>
<dbReference type="CDD" id="cd05027">
    <property type="entry name" value="S-100B"/>
    <property type="match status" value="1"/>
</dbReference>
<dbReference type="DisProt" id="DP01738"/>
<dbReference type="FunFam" id="1.10.238.10:FF:000044">
    <property type="entry name" value="Protein S100"/>
    <property type="match status" value="1"/>
</dbReference>
<dbReference type="Gene3D" id="1.10.238.10">
    <property type="entry name" value="EF-hand"/>
    <property type="match status" value="1"/>
</dbReference>
<dbReference type="IDEAL" id="IID00410"/>
<dbReference type="InterPro" id="IPR011992">
    <property type="entry name" value="EF-hand-dom_pair"/>
</dbReference>
<dbReference type="InterPro" id="IPR018247">
    <property type="entry name" value="EF_Hand_1_Ca_BS"/>
</dbReference>
<dbReference type="InterPro" id="IPR002048">
    <property type="entry name" value="EF_hand_dom"/>
</dbReference>
<dbReference type="InterPro" id="IPR028481">
    <property type="entry name" value="S100-B"/>
</dbReference>
<dbReference type="InterPro" id="IPR001751">
    <property type="entry name" value="S100/CaBP7/8-like_CS"/>
</dbReference>
<dbReference type="InterPro" id="IPR013787">
    <property type="entry name" value="S100_Ca-bd_sub"/>
</dbReference>
<dbReference type="PANTHER" id="PTHR11639:SF134">
    <property type="entry name" value="PROTEIN S100-A1-RELATED"/>
    <property type="match status" value="1"/>
</dbReference>
<dbReference type="PANTHER" id="PTHR11639">
    <property type="entry name" value="S100 CALCIUM-BINDING PROTEIN"/>
    <property type="match status" value="1"/>
</dbReference>
<dbReference type="Pfam" id="PF00036">
    <property type="entry name" value="EF-hand_1"/>
    <property type="match status" value="1"/>
</dbReference>
<dbReference type="Pfam" id="PF01023">
    <property type="entry name" value="S_100"/>
    <property type="match status" value="1"/>
</dbReference>
<dbReference type="SMART" id="SM00054">
    <property type="entry name" value="EFh"/>
    <property type="match status" value="1"/>
</dbReference>
<dbReference type="SMART" id="SM01394">
    <property type="entry name" value="S_100"/>
    <property type="match status" value="1"/>
</dbReference>
<dbReference type="SUPFAM" id="SSF47473">
    <property type="entry name" value="EF-hand"/>
    <property type="match status" value="1"/>
</dbReference>
<dbReference type="PROSITE" id="PS00018">
    <property type="entry name" value="EF_HAND_1"/>
    <property type="match status" value="1"/>
</dbReference>
<dbReference type="PROSITE" id="PS50222">
    <property type="entry name" value="EF_HAND_2"/>
    <property type="match status" value="1"/>
</dbReference>
<dbReference type="PROSITE" id="PS00303">
    <property type="entry name" value="S100_CABP"/>
    <property type="match status" value="1"/>
</dbReference>
<protein>
    <recommendedName>
        <fullName>Protein S100-B</fullName>
    </recommendedName>
    <alternativeName>
        <fullName evidence="15">S-100 protein beta chain</fullName>
    </alternativeName>
    <alternativeName>
        <fullName>S-100 protein subunit beta</fullName>
    </alternativeName>
    <alternativeName>
        <fullName>S100 calcium-binding protein B</fullName>
    </alternativeName>
</protein>
<accession>P04271</accession>
<accession>D3DSN6</accession>
<evidence type="ECO:0000250" key="1">
    <source>
        <dbReference type="UniProtKB" id="P02638"/>
    </source>
</evidence>
<evidence type="ECO:0000250" key="2">
    <source>
        <dbReference type="UniProtKB" id="P04631"/>
    </source>
</evidence>
<evidence type="ECO:0000250" key="3">
    <source>
        <dbReference type="UniProtKB" id="P50114"/>
    </source>
</evidence>
<evidence type="ECO:0000255" key="4">
    <source>
        <dbReference type="PROSITE-ProRule" id="PRU00448"/>
    </source>
</evidence>
<evidence type="ECO:0000269" key="5">
    <source>
    </source>
</evidence>
<evidence type="ECO:0000269" key="6">
    <source>
    </source>
</evidence>
<evidence type="ECO:0000269" key="7">
    <source>
    </source>
</evidence>
<evidence type="ECO:0000269" key="8">
    <source>
    </source>
</evidence>
<evidence type="ECO:0000269" key="9">
    <source>
    </source>
</evidence>
<evidence type="ECO:0000269" key="10">
    <source>
    </source>
</evidence>
<evidence type="ECO:0000269" key="11">
    <source>
    </source>
</evidence>
<evidence type="ECO:0000269" key="12">
    <source>
    </source>
</evidence>
<evidence type="ECO:0000269" key="13">
    <source>
    </source>
</evidence>
<evidence type="ECO:0000269" key="14">
    <source>
    </source>
</evidence>
<evidence type="ECO:0000303" key="15">
    <source>
    </source>
</evidence>
<evidence type="ECO:0000303" key="16">
    <source>
    </source>
</evidence>
<evidence type="ECO:0000305" key="17"/>
<evidence type="ECO:0000312" key="18">
    <source>
        <dbReference type="HGNC" id="HGNC:10500"/>
    </source>
</evidence>
<evidence type="ECO:0007744" key="19">
    <source>
        <dbReference type="PDB" id="2H61"/>
    </source>
</evidence>
<evidence type="ECO:0007744" key="20">
    <source>
        <dbReference type="PDB" id="3CZT"/>
    </source>
</evidence>
<evidence type="ECO:0007744" key="21">
    <source>
        <dbReference type="PDB" id="3D0Y"/>
    </source>
</evidence>
<evidence type="ECO:0007744" key="22">
    <source>
        <dbReference type="PDB" id="3D10"/>
    </source>
</evidence>
<evidence type="ECO:0007829" key="23">
    <source>
        <dbReference type="PDB" id="2PRU"/>
    </source>
</evidence>
<evidence type="ECO:0007829" key="24">
    <source>
        <dbReference type="PDB" id="5D7F"/>
    </source>
</evidence>
<reference key="1">
    <citation type="journal article" date="1990" name="J. Biol. Chem.">
        <title>Cloning and expression of the human S100 beta gene.</title>
        <authorList>
            <person name="Allore R.J."/>
            <person name="Friend W.C."/>
            <person name="O'Hanlon D."/>
            <person name="Neilson K.M."/>
            <person name="Baumal R."/>
            <person name="Dunn R.J."/>
            <person name="Marks A."/>
        </authorList>
    </citation>
    <scope>NUCLEOTIDE SEQUENCE [GENOMIC DNA]</scope>
    <scope>TISSUE SPECIFICITY</scope>
</reference>
<reference key="2">
    <citation type="submission" date="2004-06" db="EMBL/GenBank/DDBJ databases">
        <title>Cloning of human full open reading frames in Gateway(TM) system entry vector (pDONR201).</title>
        <authorList>
            <person name="Ebert L."/>
            <person name="Schick M."/>
            <person name="Neubert P."/>
            <person name="Schatten R."/>
            <person name="Henze S."/>
            <person name="Korn B."/>
        </authorList>
    </citation>
    <scope>NUCLEOTIDE SEQUENCE [LARGE SCALE MRNA]</scope>
</reference>
<reference key="3">
    <citation type="journal article" date="2000" name="Nature">
        <title>The DNA sequence of human chromosome 21.</title>
        <authorList>
            <person name="Hattori M."/>
            <person name="Fujiyama A."/>
            <person name="Taylor T.D."/>
            <person name="Watanabe H."/>
            <person name="Yada T."/>
            <person name="Park H.-S."/>
            <person name="Toyoda A."/>
            <person name="Ishii K."/>
            <person name="Totoki Y."/>
            <person name="Choi D.-K."/>
            <person name="Groner Y."/>
            <person name="Soeda E."/>
            <person name="Ohki M."/>
            <person name="Takagi T."/>
            <person name="Sakaki Y."/>
            <person name="Taudien S."/>
            <person name="Blechschmidt K."/>
            <person name="Polley A."/>
            <person name="Menzel U."/>
            <person name="Delabar J."/>
            <person name="Kumpf K."/>
            <person name="Lehmann R."/>
            <person name="Patterson D."/>
            <person name="Reichwald K."/>
            <person name="Rump A."/>
            <person name="Schillhabel M."/>
            <person name="Schudy A."/>
            <person name="Zimmermann W."/>
            <person name="Rosenthal A."/>
            <person name="Kudoh J."/>
            <person name="Shibuya K."/>
            <person name="Kawasaki K."/>
            <person name="Asakawa S."/>
            <person name="Shintani A."/>
            <person name="Sasaki T."/>
            <person name="Nagamine K."/>
            <person name="Mitsuyama S."/>
            <person name="Antonarakis S.E."/>
            <person name="Minoshima S."/>
            <person name="Shimizu N."/>
            <person name="Nordsiek G."/>
            <person name="Hornischer K."/>
            <person name="Brandt P."/>
            <person name="Scharfe M."/>
            <person name="Schoen O."/>
            <person name="Desario A."/>
            <person name="Reichelt J."/>
            <person name="Kauer G."/>
            <person name="Bloecker H."/>
            <person name="Ramser J."/>
            <person name="Beck A."/>
            <person name="Klages S."/>
            <person name="Hennig S."/>
            <person name="Riesselmann L."/>
            <person name="Dagand E."/>
            <person name="Wehrmeyer S."/>
            <person name="Borzym K."/>
            <person name="Gardiner K."/>
            <person name="Nizetic D."/>
            <person name="Francis F."/>
            <person name="Lehrach H."/>
            <person name="Reinhardt R."/>
            <person name="Yaspo M.-L."/>
        </authorList>
    </citation>
    <scope>NUCLEOTIDE SEQUENCE [LARGE SCALE GENOMIC DNA]</scope>
</reference>
<reference key="4">
    <citation type="submission" date="2005-09" db="EMBL/GenBank/DDBJ databases">
        <authorList>
            <person name="Mural R.J."/>
            <person name="Istrail S."/>
            <person name="Sutton G.G."/>
            <person name="Florea L."/>
            <person name="Halpern A.L."/>
            <person name="Mobarry C.M."/>
            <person name="Lippert R."/>
            <person name="Walenz B."/>
            <person name="Shatkay H."/>
            <person name="Dew I."/>
            <person name="Miller J.R."/>
            <person name="Flanigan M.J."/>
            <person name="Edwards N.J."/>
            <person name="Bolanos R."/>
            <person name="Fasulo D."/>
            <person name="Halldorsson B.V."/>
            <person name="Hannenhalli S."/>
            <person name="Turner R."/>
            <person name="Yooseph S."/>
            <person name="Lu F."/>
            <person name="Nusskern D.R."/>
            <person name="Shue B.C."/>
            <person name="Zheng X.H."/>
            <person name="Zhong F."/>
            <person name="Delcher A.L."/>
            <person name="Huson D.H."/>
            <person name="Kravitz S.A."/>
            <person name="Mouchard L."/>
            <person name="Reinert K."/>
            <person name="Remington K.A."/>
            <person name="Clark A.G."/>
            <person name="Waterman M.S."/>
            <person name="Eichler E.E."/>
            <person name="Adams M.D."/>
            <person name="Hunkapiller M.W."/>
            <person name="Myers E.W."/>
            <person name="Venter J.C."/>
        </authorList>
    </citation>
    <scope>NUCLEOTIDE SEQUENCE [LARGE SCALE GENOMIC DNA]</scope>
</reference>
<reference key="5">
    <citation type="journal article" date="2004" name="Genome Res.">
        <title>The status, quality, and expansion of the NIH full-length cDNA project: the Mammalian Gene Collection (MGC).</title>
        <authorList>
            <consortium name="The MGC Project Team"/>
        </authorList>
    </citation>
    <scope>NUCLEOTIDE SEQUENCE [LARGE SCALE MRNA]</scope>
    <source>
        <tissue>Skin</tissue>
    </source>
</reference>
<reference key="6">
    <citation type="journal article" date="1985" name="J. Neurochem.">
        <title>Characterization of human brain S100 protein fraction: amino acid sequence of S100 beta.</title>
        <authorList>
            <person name="Jensen R."/>
            <person name="Marshak D.R."/>
            <person name="Anderson C."/>
            <person name="Lukas T.J."/>
            <person name="Watterson D.M."/>
        </authorList>
    </citation>
    <scope>PROTEIN SEQUENCE OF 2-92</scope>
</reference>
<reference key="7">
    <citation type="journal article" date="1984" name="Biochim. Biophys. Acta">
        <title>Purification, characterization and ion binding properties of human brain S100b protein.</title>
        <authorList>
            <person name="Baudier J."/>
            <person name="Glasser N."/>
            <person name="Haglid K."/>
            <person name="Gerard D."/>
        </authorList>
    </citation>
    <scope>FUNCTION</scope>
    <scope>METAL ION-BINDING PROPERTIES</scope>
</reference>
<reference key="8">
    <citation type="journal article" date="1999" name="Exp. Cell Res.">
        <title>Demonstration of heterodimer formation between S100B and S100A6 in the yeast two-hybrid system and human melanoma.</title>
        <authorList>
            <person name="Yang Q."/>
            <person name="O'Hanlon D."/>
            <person name="Heizmann C.W."/>
            <person name="Marks A."/>
        </authorList>
    </citation>
    <scope>SUBCELLULAR LOCATION</scope>
    <scope>INTERACTION WITH S100A6</scope>
</reference>
<reference key="9">
    <citation type="journal article" date="2010" name="J. Biol. Chem.">
        <title>The 1.5 A crystal structure of human receptor for advanced glycation endproducts (RAGE) ectodomains reveals unique features determining ligand binding.</title>
        <authorList>
            <person name="Park H."/>
            <person name="Adsit F.G."/>
            <person name="Boyington J.C."/>
        </authorList>
    </citation>
    <scope>INTERACTION WITH AGER</scope>
</reference>
<reference key="10">
    <citation type="journal article" date="2010" name="Mol. Cell. Biol.">
        <title>The calcium-dependent interaction between S100B and the mitochondrial AAA ATPase ATAD3A and the role of this complex in the cytoplasmic processing of ATAD3A.</title>
        <authorList>
            <person name="Gilquin B."/>
            <person name="Cannon B.R."/>
            <person name="Hubstenberger A."/>
            <person name="Moulouel B."/>
            <person name="Falk E."/>
            <person name="Merle N."/>
            <person name="Assard N."/>
            <person name="Kieffer S."/>
            <person name="Rousseau D."/>
            <person name="Wilder P.T."/>
            <person name="Weber D.J."/>
            <person name="Baudier J."/>
        </authorList>
    </citation>
    <scope>FUNCTION</scope>
    <scope>INTERACTION WITH ATAD3A</scope>
</reference>
<reference key="11">
    <citation type="journal article" date="2012" name="J. Biol. Chem.">
        <title>S100 proteins modulate protein phosphatase 5 function: a link between CA2+ signal transduction and protein dephosphorylation.</title>
        <authorList>
            <person name="Yamaguchi F."/>
            <person name="Umeda Y."/>
            <person name="Shimamoto S."/>
            <person name="Tsuchiya M."/>
            <person name="Tokumitsu H."/>
            <person name="Tokuda M."/>
            <person name="Kobayashi R."/>
        </authorList>
    </citation>
    <scope>FUNCTION</scope>
    <scope>INTERACTION WITH PPP5C</scope>
</reference>
<reference key="12">
    <citation type="journal article" date="2021" name="Cell Calcium">
        <title>Regulation of the tubulin polymerization-promoting protein by Ca2+/S100 proteins.</title>
        <authorList>
            <person name="Doi S."/>
            <person name="Fujioka N."/>
            <person name="Ohtsuka S."/>
            <person name="Kondo R."/>
            <person name="Yamamoto M."/>
            <person name="Denda M."/>
            <person name="Magari M."/>
            <person name="Kanayama N."/>
            <person name="Hatano N."/>
            <person name="Morishita R."/>
            <person name="Hasegawa T."/>
            <person name="Tokumitsu H."/>
        </authorList>
    </citation>
    <scope>INTERACTION WITH TPPP</scope>
</reference>
<reference key="13">
    <citation type="journal article" date="1998" name="Structure">
        <title>A novel calcium-sensitive switch revealed by the structure of human S100B in the calcium-bound form.</title>
        <authorList>
            <person name="Smith S.P."/>
            <person name="Shaw G.S."/>
        </authorList>
    </citation>
    <scope>STRUCTURE BY NMR</scope>
</reference>
<reference key="14">
    <citation type="journal article" date="2003" name="J. Biol. Chem.">
        <title>A novel S100 target conformation is revealed by the solution structure of the Ca2+-S100B-TRTK-12 complex.</title>
        <authorList>
            <person name="McClintock K.A."/>
            <person name="Shaw G.S."/>
        </authorList>
    </citation>
    <scope>STRUCTURE BY NMR IN COMPLEX WITH CAPZA1 AND CALCIUM</scope>
    <scope>SUBUNIT</scope>
</reference>
<reference evidence="20 21 22" key="15">
    <citation type="journal article" date="2011" name="Biochim. Biophys. Acta">
        <title>The crystal structures of human S100B in the zinc- and calcium-loaded state at three pH values reveal zinc ligand swapping.</title>
        <authorList>
            <person name="Ostendorp T."/>
            <person name="Diez J."/>
            <person name="Heizmann C.W."/>
            <person name="Fritz G."/>
        </authorList>
    </citation>
    <scope>X-RAY CRYSTALLOGRAPHY (1.40 ANGSTROMS) IN COMPLEX WITH CA(2+) AND ZN(2+)</scope>
    <scope>FUNCTION</scope>
</reference>
<keyword id="KW-0002">3D-structure</keyword>
<keyword id="KW-0007">Acetylation</keyword>
<keyword id="KW-0106">Calcium</keyword>
<keyword id="KW-0130">Cell adhesion</keyword>
<keyword id="KW-0963">Cytoplasm</keyword>
<keyword id="KW-0903">Direct protein sequencing</keyword>
<keyword id="KW-0479">Metal-binding</keyword>
<keyword id="KW-0539">Nucleus</keyword>
<keyword id="KW-1267">Proteomics identification</keyword>
<keyword id="KW-1185">Reference proteome</keyword>
<keyword id="KW-0677">Repeat</keyword>
<keyword id="KW-0964">Secreted</keyword>
<keyword id="KW-0862">Zinc</keyword>
<sequence>MSELEKAMVALIDVFHQYSGREGDKHKLKKSELKELINNELSHFLEEIKEQEVVDKVMETLDNDGDGECDFQEFMAFVAMVTTACHEFFEHE</sequence>
<gene>
    <name evidence="16 18" type="primary">S100B</name>
</gene>
<feature type="initiator methionine" description="Removed" evidence="12">
    <location>
        <position position="1"/>
    </location>
</feature>
<feature type="chain" id="PRO_0000143966" description="Protein S100-B">
    <location>
        <begin position="2"/>
        <end position="92"/>
    </location>
</feature>
<feature type="domain" description="EF-hand 1" evidence="17">
    <location>
        <begin position="13"/>
        <end position="48"/>
    </location>
</feature>
<feature type="domain" description="EF-hand 2" evidence="4">
    <location>
        <begin position="49"/>
        <end position="84"/>
    </location>
</feature>
<feature type="binding site" evidence="8 20">
    <location>
        <position position="16"/>
    </location>
    <ligand>
        <name>Zn(2+)</name>
        <dbReference type="ChEBI" id="CHEBI:29105"/>
    </ligand>
</feature>
<feature type="binding site" evidence="8 20 21 22">
    <location>
        <position position="19"/>
    </location>
    <ligand>
        <name>Ca(2+)</name>
        <dbReference type="ChEBI" id="CHEBI:29108"/>
        <label>1</label>
        <note>low affinity</note>
    </ligand>
</feature>
<feature type="binding site" evidence="8 20 21 22">
    <location>
        <position position="22"/>
    </location>
    <ligand>
        <name>Ca(2+)</name>
        <dbReference type="ChEBI" id="CHEBI:29108"/>
        <label>1</label>
        <note>low affinity</note>
    </ligand>
</feature>
<feature type="binding site" evidence="8 20 21 22">
    <location>
        <position position="24"/>
    </location>
    <ligand>
        <name>Ca(2+)</name>
        <dbReference type="ChEBI" id="CHEBI:29108"/>
        <label>1</label>
        <note>low affinity</note>
    </ligand>
</feature>
<feature type="binding site" evidence="8 20">
    <location>
        <position position="26"/>
    </location>
    <ligand>
        <name>Zn(2+)</name>
        <dbReference type="ChEBI" id="CHEBI:29105"/>
    </ligand>
</feature>
<feature type="binding site" evidence="8 20 21 22">
    <location>
        <position position="27"/>
    </location>
    <ligand>
        <name>Ca(2+)</name>
        <dbReference type="ChEBI" id="CHEBI:29108"/>
        <label>1</label>
        <note>low affinity</note>
    </ligand>
</feature>
<feature type="binding site" evidence="8 20 21 22">
    <location>
        <position position="32"/>
    </location>
    <ligand>
        <name>Ca(2+)</name>
        <dbReference type="ChEBI" id="CHEBI:29108"/>
        <label>1</label>
        <note>low affinity</note>
    </ligand>
</feature>
<feature type="binding site" evidence="4 8 20 21 22">
    <location>
        <position position="62"/>
    </location>
    <ligand>
        <name>Ca(2+)</name>
        <dbReference type="ChEBI" id="CHEBI:29108"/>
        <label>2</label>
        <note>high affinity</note>
    </ligand>
</feature>
<feature type="binding site" evidence="4 8 19 20 21 22">
    <location>
        <position position="64"/>
    </location>
    <ligand>
        <name>Ca(2+)</name>
        <dbReference type="ChEBI" id="CHEBI:29108"/>
        <label>2</label>
        <note>high affinity</note>
    </ligand>
</feature>
<feature type="binding site" evidence="4 8 20 21 22">
    <location>
        <position position="66"/>
    </location>
    <ligand>
        <name>Ca(2+)</name>
        <dbReference type="ChEBI" id="CHEBI:29108"/>
        <label>2</label>
        <note>high affinity</note>
    </ligand>
</feature>
<feature type="binding site" evidence="4 8 20 21 22">
    <location>
        <position position="68"/>
    </location>
    <ligand>
        <name>Ca(2+)</name>
        <dbReference type="ChEBI" id="CHEBI:29108"/>
        <label>2</label>
        <note>high affinity</note>
    </ligand>
</feature>
<feature type="binding site" evidence="4 8 20 21 22">
    <location>
        <position position="73"/>
    </location>
    <ligand>
        <name>Ca(2+)</name>
        <dbReference type="ChEBI" id="CHEBI:29108"/>
        <label>2</label>
        <note>high affinity</note>
    </ligand>
</feature>
<feature type="binding site" evidence="8 20">
    <location>
        <position position="86"/>
    </location>
    <ligand>
        <name>Zn(2+)</name>
        <dbReference type="ChEBI" id="CHEBI:29105"/>
    </ligand>
</feature>
<feature type="binding site" evidence="8 20">
    <location>
        <position position="91"/>
    </location>
    <ligand>
        <name>Zn(2+)</name>
        <dbReference type="ChEBI" id="CHEBI:29105"/>
    </ligand>
</feature>
<feature type="modified residue" description="Blocked amino end (Ser); alternate" evidence="12">
    <location>
        <position position="2"/>
    </location>
</feature>
<feature type="modified residue" description="N-acetylserine; alternate" evidence="1">
    <location>
        <position position="2"/>
    </location>
</feature>
<feature type="helix" evidence="24">
    <location>
        <begin position="3"/>
        <end position="19"/>
    </location>
</feature>
<feature type="strand" evidence="24">
    <location>
        <begin position="21"/>
        <end position="24"/>
    </location>
</feature>
<feature type="helix" evidence="24">
    <location>
        <begin position="30"/>
        <end position="40"/>
    </location>
</feature>
<feature type="turn" evidence="24">
    <location>
        <begin position="42"/>
        <end position="44"/>
    </location>
</feature>
<feature type="strand" evidence="23">
    <location>
        <begin position="47"/>
        <end position="49"/>
    </location>
</feature>
<feature type="helix" evidence="24">
    <location>
        <begin position="51"/>
        <end position="61"/>
    </location>
</feature>
<feature type="strand" evidence="24">
    <location>
        <begin position="65"/>
        <end position="69"/>
    </location>
</feature>
<feature type="helix" evidence="24">
    <location>
        <begin position="71"/>
        <end position="85"/>
    </location>
</feature>
<feature type="helix" evidence="24">
    <location>
        <begin position="86"/>
        <end position="88"/>
    </location>
</feature>
<feature type="turn" evidence="23">
    <location>
        <begin position="89"/>
        <end position="91"/>
    </location>
</feature>
<comment type="function">
    <text evidence="1 2 3 6 8 9 13">Small zinc- and- and calcium-binding protein that is highly expressed in astrocytes and constitutes one of the most abundant soluble proteins in brain (PubMed:20950652, PubMed:6487634). Weakly binds calcium but binds zinc very tightly-distinct binding sites with different affinities exist for both ions on each monomer (PubMed:20950652, PubMed:6487634). Physiological concentrations of potassium ion antagonize the binding of both divalent cations, especially affecting high-affinity calcium-binding sites (By similarity). Acts as a neurotrophic factor that promotes astrocytosis and axonal proliferation (By similarity). Involved in innervation of thermogenic adipose tissue by acting as an adipocyte-derived neurotrophic factor that promotes sympathetic innervation of adipose tissue (By similarity). Binds to and initiates the activation of STK38 by releasing autoinhibitory intramolecular interactions within the kinase (By similarity). Interaction with AGER after myocardial infarction may play a role in myocyte apoptosis by activating ERK1/2 and p53/TP53 signaling (By similarity). Could assist ATAD3A cytoplasmic processing, preventing aggregation and favoring mitochondrial localization (PubMed:20351179). May mediate calcium-dependent regulation on many physiological processes by interacting with other proteins, such as TPR-containing proteins, and modulating their activity (PubMed:22399290).</text>
</comment>
<comment type="subunit">
    <text evidence="1 2 3 5 6 7 8 9 11 14">Dimer of either two alpha chains, or two beta chains, or one alpha and one beta chain (PubMed:12480931, PubMed:20950652). The S100B dimer binds two molecules of STK38 (By similarity). Interacts with CACYBP in a calcium-dependent manner (By similarity). Interacts with ATAD3A; this interaction probably occurs in the cytosol prior to ATAD3A mitochondrial targeting (PubMed:20351179). Interacts with S100A6 (PubMed:9925766). The S100B dimer interacts with two molecules of CAPZA1 (PubMed:12480931). Interacts with AGER (PubMed:20943659). Interacts with PPP5C (via TPR repeats); the interaction is calcium-dependent and modulates PPP5C activity (PubMed:22399290). Interacts with TPPP; this interaction inhibits TPPP dimerization (PubMed:33831707). Interacts with isoform CLSTN3beta of CLSTN3; interaction promotes secretion (By similarity).</text>
</comment>
<comment type="interaction">
    <interactant intactId="EBI-458391">
        <id>P04271</id>
    </interactant>
    <interactant intactId="EBI-640741">
        <id>P01023</id>
        <label>A2M</label>
    </interactant>
    <organismsDiffer>false</organismsDiffer>
    <experiments>3</experiments>
</comment>
<comment type="interaction">
    <interactant intactId="EBI-458391">
        <id>P04271</id>
    </interactant>
    <interactant intactId="EBI-1646426">
        <id>Q15109</id>
        <label>AGER</label>
    </interactant>
    <organismsDiffer>false</organismsDiffer>
    <experiments>5</experiments>
</comment>
<comment type="interaction">
    <interactant intactId="EBI-458391">
        <id>P04271</id>
    </interactant>
    <interactant intactId="EBI-25646567">
        <id>Q06481-5</id>
        <label>APLP2</label>
    </interactant>
    <organismsDiffer>false</organismsDiffer>
    <experiments>3</experiments>
</comment>
<comment type="interaction">
    <interactant intactId="EBI-458391">
        <id>P04271</id>
    </interactant>
    <interactant intactId="EBI-77613">
        <id>P05067</id>
        <label>APP</label>
    </interactant>
    <organismsDiffer>false</organismsDiffer>
    <experiments>3</experiments>
</comment>
<comment type="interaction">
    <interactant intactId="EBI-458391">
        <id>P04271</id>
    </interactant>
    <interactant intactId="EBI-718504">
        <id>Q13867</id>
        <label>BLMH</label>
    </interactant>
    <organismsDiffer>false</organismsDiffer>
    <experiments>3</experiments>
</comment>
<comment type="interaction">
    <interactant intactId="EBI-458391">
        <id>P04271</id>
    </interactant>
    <interactant intactId="EBI-1383687">
        <id>Q9UQM7</id>
        <label>CAMK2A</label>
    </interactant>
    <organismsDiffer>false</organismsDiffer>
    <experiments>3</experiments>
</comment>
<comment type="interaction">
    <interactant intactId="EBI-458391">
        <id>P04271</id>
    </interactant>
    <interactant intactId="EBI-25890990">
        <id>P27824-2</id>
        <label>CANX</label>
    </interactant>
    <organismsDiffer>false</organismsDiffer>
    <experiments>3</experiments>
</comment>
<comment type="interaction">
    <interactant intactId="EBI-458391">
        <id>P04271</id>
    </interactant>
    <interactant intactId="EBI-355586">
        <id>P52907</id>
        <label>CAPZA1</label>
    </interactant>
    <organismsDiffer>false</organismsDiffer>
    <experiments>3</experiments>
</comment>
<comment type="interaction">
    <interactant intactId="EBI-458391">
        <id>P04271</id>
    </interactant>
    <interactant intactId="EBI-25891175">
        <id>Q86YQ8-2</id>
        <label>CPNE8</label>
    </interactant>
    <organismsDiffer>false</organismsDiffer>
    <experiments>3</experiments>
</comment>
<comment type="interaction">
    <interactant intactId="EBI-458391">
        <id>P04271</id>
    </interactant>
    <interactant intactId="EBI-713677">
        <id>Q9UGL9</id>
        <label>CRCT1</label>
    </interactant>
    <organismsDiffer>false</organismsDiffer>
    <experiments>3</experiments>
</comment>
<comment type="interaction">
    <interactant intactId="EBI-458391">
        <id>P04271</id>
    </interactant>
    <interactant intactId="EBI-9087876">
        <id>P48730-2</id>
        <label>CSNK1D</label>
    </interactant>
    <organismsDiffer>false</organismsDiffer>
    <experiments>3</experiments>
</comment>
<comment type="interaction">
    <interactant intactId="EBI-458391">
        <id>P04271</id>
    </interactant>
    <interactant intactId="EBI-12133006">
        <id>O75553-5</id>
        <label>DAB1</label>
    </interactant>
    <organismsDiffer>false</organismsDiffer>
    <experiments>3</experiments>
</comment>
<comment type="interaction">
    <interactant intactId="EBI-458391">
        <id>P04271</id>
    </interactant>
    <interactant intactId="EBI-25840445">
        <id>O14576-2</id>
        <label>DYNC1I1</label>
    </interactant>
    <organismsDiffer>false</organismsDiffer>
    <experiments>3</experiments>
</comment>
<comment type="interaction">
    <interactant intactId="EBI-458391">
        <id>P04271</id>
    </interactant>
    <interactant intactId="EBI-720706">
        <id>P21860</id>
        <label>ERBB3</label>
    </interactant>
    <organismsDiffer>false</organismsDiffer>
    <experiments>3</experiments>
</comment>
<comment type="interaction">
    <interactant intactId="EBI-458391">
        <id>P04271</id>
    </interactant>
    <interactant intactId="EBI-11052499">
        <id>P0DMV8</id>
        <label>HSPA1A</label>
    </interactant>
    <organismsDiffer>false</organismsDiffer>
    <experiments>3</experiments>
</comment>
<comment type="interaction">
    <interactant intactId="EBI-458391">
        <id>P04271</id>
    </interactant>
    <interactant intactId="EBI-739832">
        <id>Q8TBB1</id>
        <label>LNX1</label>
    </interactant>
    <organismsDiffer>false</organismsDiffer>
    <experiments>3</experiments>
</comment>
<comment type="interaction">
    <interactant intactId="EBI-458391">
        <id>P04271</id>
    </interactant>
    <interactant intactId="EBI-25833471">
        <id>Q07954-2</id>
        <label>LRP1</label>
    </interactant>
    <organismsDiffer>false</organismsDiffer>
    <experiments>3</experiments>
</comment>
<comment type="interaction">
    <interactant intactId="EBI-458391">
        <id>P04271</id>
    </interactant>
    <interactant intactId="EBI-389668">
        <id>Q00987</id>
        <label>MDM2</label>
    </interactant>
    <organismsDiffer>false</organismsDiffer>
    <experiments>2</experiments>
</comment>
<comment type="interaction">
    <interactant intactId="EBI-458391">
        <id>P04271</id>
    </interactant>
    <interactant intactId="EBI-398437">
        <id>O15151</id>
        <label>MDM4</label>
    </interactant>
    <organismsDiffer>false</organismsDiffer>
    <experiments>3</experiments>
</comment>
<comment type="interaction">
    <interactant intactId="EBI-458391">
        <id>P04271</id>
    </interactant>
    <interactant intactId="EBI-6269719">
        <id>Q13015</id>
        <label>MLLT11</label>
    </interactant>
    <organismsDiffer>false</organismsDiffer>
    <experiments>2</experiments>
</comment>
<comment type="interaction">
    <interactant intactId="EBI-458391">
        <id>P04271</id>
    </interactant>
    <interactant intactId="EBI-350338">
        <id>P35579</id>
        <label>MYH9</label>
    </interactant>
    <organismsDiffer>false</organismsDiffer>
    <experiments>2</experiments>
</comment>
<comment type="interaction">
    <interactant intactId="EBI-458391">
        <id>P04271</id>
    </interactant>
    <interactant intactId="EBI-12135485">
        <id>P41271-2</id>
        <label>NBL1</label>
    </interactant>
    <organismsDiffer>false</organismsDiffer>
    <experiments>3</experiments>
</comment>
<comment type="interaction">
    <interactant intactId="EBI-458391">
        <id>P04271</id>
    </interactant>
    <interactant intactId="EBI-716247">
        <id>Q15843</id>
        <label>NEDD8</label>
    </interactant>
    <organismsDiffer>false</organismsDiffer>
    <experiments>3</experiments>
</comment>
<comment type="interaction">
    <interactant intactId="EBI-458391">
        <id>P04271</id>
    </interactant>
    <interactant intactId="EBI-357253">
        <id>P62136</id>
        <label>PPP1CA</label>
    </interactant>
    <organismsDiffer>false</organismsDiffer>
    <experiments>3</experiments>
</comment>
<comment type="interaction">
    <interactant intactId="EBI-458391">
        <id>P04271</id>
    </interactant>
    <interactant intactId="EBI-476586">
        <id>P17612</id>
        <label>PRKACA</label>
    </interactant>
    <organismsDiffer>false</organismsDiffer>
    <experiments>3</experiments>
</comment>
<comment type="interaction">
    <interactant intactId="EBI-458391">
        <id>P04271</id>
    </interactant>
    <interactant intactId="EBI-413628">
        <id>P63000</id>
        <label>RAC1</label>
    </interactant>
    <organismsDiffer>false</organismsDiffer>
    <experiments>3</experiments>
</comment>
<comment type="interaction">
    <interactant intactId="EBI-458391">
        <id>P04271</id>
    </interactant>
    <interactant intactId="EBI-963034">
        <id>Q15418</id>
        <label>RPS6KA1</label>
    </interactant>
    <organismsDiffer>false</organismsDiffer>
    <experiments>2</experiments>
</comment>
<comment type="interaction">
    <interactant intactId="EBI-458391">
        <id>P04271</id>
    </interactant>
    <interactant intactId="EBI-743686">
        <id>P23297</id>
        <label>S100A1</label>
    </interactant>
    <organismsDiffer>false</organismsDiffer>
    <experiments>25</experiments>
</comment>
<comment type="interaction">
    <interactant intactId="EBI-458391">
        <id>P04271</id>
    </interactant>
    <interactant intactId="EBI-11746600">
        <id>Q5T7Y6</id>
        <label>S100A1</label>
    </interactant>
    <organismsDiffer>false</organismsDiffer>
    <experiments>5</experiments>
</comment>
<comment type="interaction">
    <interactant intactId="EBI-458391">
        <id>P04271</id>
    </interactant>
    <interactant intactId="EBI-701862">
        <id>P31949</id>
        <label>S100A11</label>
    </interactant>
    <organismsDiffer>false</organismsDiffer>
    <experiments>5</experiments>
</comment>
<comment type="interaction">
    <interactant intactId="EBI-458391">
        <id>P04271</id>
    </interactant>
    <interactant intactId="EBI-752230">
        <id>P29034</id>
        <label>S100A2</label>
    </interactant>
    <organismsDiffer>false</organismsDiffer>
    <experiments>9</experiments>
</comment>
<comment type="interaction">
    <interactant intactId="EBI-458391">
        <id>P04271</id>
    </interactant>
    <interactant intactId="EBI-717058">
        <id>P26447</id>
        <label>S100A4</label>
    </interactant>
    <organismsDiffer>false</organismsDiffer>
    <experiments>8</experiments>
</comment>
<comment type="interaction">
    <interactant intactId="EBI-458391">
        <id>P04271</id>
    </interactant>
    <interactant intactId="EBI-352877">
        <id>P06703</id>
        <label>S100A6</label>
    </interactant>
    <organismsDiffer>false</organismsDiffer>
    <experiments>6</experiments>
</comment>
<comment type="interaction">
    <interactant intactId="EBI-458391">
        <id>P04271</id>
    </interactant>
    <interactant intactId="EBI-1055001">
        <id>P06702</id>
        <label>S100A9</label>
    </interactant>
    <organismsDiffer>false</organismsDiffer>
    <experiments>3</experiments>
</comment>
<comment type="interaction">
    <interactant intactId="EBI-458391">
        <id>P04271</id>
    </interactant>
    <interactant intactId="EBI-458391">
        <id>P04271</id>
        <label>S100B</label>
    </interactant>
    <organismsDiffer>false</organismsDiffer>
    <experiments>25</experiments>
</comment>
<comment type="interaction">
    <interactant intactId="EBI-458391">
        <id>P04271</id>
    </interactant>
    <interactant intactId="EBI-743700">
        <id>P25815</id>
        <label>S100P</label>
    </interactant>
    <organismsDiffer>false</organismsDiffer>
    <experiments>7</experiments>
</comment>
<comment type="interaction">
    <interactant intactId="EBI-458391">
        <id>P04271</id>
    </interactant>
    <interactant intactId="EBI-12198403">
        <id>Q8WXG8</id>
        <label>S100Z</label>
    </interactant>
    <organismsDiffer>false</organismsDiffer>
    <experiments>3</experiments>
</comment>
<comment type="interaction">
    <interactant intactId="EBI-458391">
        <id>P04271</id>
    </interactant>
    <interactant intactId="EBI-727004">
        <id>O00560</id>
        <label>SDCBP</label>
    </interactant>
    <organismsDiffer>false</organismsDiffer>
    <experiments>3</experiments>
</comment>
<comment type="interaction">
    <interactant intactId="EBI-458391">
        <id>P04271</id>
    </interactant>
    <interactant intactId="EBI-25891137">
        <id>Q92599-3</id>
        <label>SEPTIN8</label>
    </interactant>
    <organismsDiffer>false</organismsDiffer>
    <experiments>3</experiments>
</comment>
<comment type="interaction">
    <interactant intactId="EBI-458391">
        <id>P04271</id>
    </interactant>
    <interactant intactId="EBI-742688">
        <id>Q9NZD8</id>
        <label>SPG21</label>
    </interactant>
    <organismsDiffer>false</organismsDiffer>
    <experiments>7</experiments>
</comment>
<comment type="interaction">
    <interactant intactId="EBI-458391">
        <id>P04271</id>
    </interactant>
    <interactant intactId="EBI-366083">
        <id>P04637</id>
        <label>TP53</label>
    </interactant>
    <organismsDiffer>false</organismsDiffer>
    <experiments>3</experiments>
</comment>
<comment type="interaction">
    <interactant intactId="EBI-458391">
        <id>P04271</id>
    </interactant>
    <interactant intactId="EBI-359276">
        <id>Q9Y4K3</id>
        <label>TRAF6</label>
    </interactant>
    <organismsDiffer>false</organismsDiffer>
    <experiments>3</experiments>
</comment>
<comment type="interaction">
    <interactant intactId="EBI-458391">
        <id>P04271</id>
    </interactant>
    <interactant intactId="EBI-25834258">
        <id>P13051-2</id>
        <label>UNG</label>
    </interactant>
    <organismsDiffer>false</organismsDiffer>
    <experiments>3</experiments>
</comment>
<comment type="interaction">
    <interactant intactId="EBI-458391">
        <id>P04271</id>
    </interactant>
    <interactant intactId="EBI-707773">
        <id>P17028</id>
        <label>ZNF24</label>
    </interactant>
    <organismsDiffer>false</organismsDiffer>
    <experiments>3</experiments>
</comment>
<comment type="subcellular location">
    <subcellularLocation>
        <location evidence="14">Cytoplasm</location>
    </subcellularLocation>
    <subcellularLocation>
        <location evidence="14">Nucleus</location>
    </subcellularLocation>
    <subcellularLocation>
        <location evidence="3">Secreted</location>
    </subcellularLocation>
    <text evidence="3">Secretion into the medium is promoted by interaction with isoform CLSTN3beta of CLSTN3.</text>
</comment>
<comment type="tissue specificity">
    <text evidence="10">Although predominant among the water-soluble brain proteins, S100 is also found in a variety of other tissues.</text>
</comment>
<comment type="similarity">
    <text evidence="17">Belongs to the S-100 family.</text>
</comment>
<comment type="online information" name="Atlas of Genetics and Cytogenetics in Oncology and Haematology">
    <link uri="https://atlasgeneticsoncology.org/gene/42195/S100B"/>
</comment>
<proteinExistence type="evidence at protein level"/>
<organism>
    <name type="scientific">Homo sapiens</name>
    <name type="common">Human</name>
    <dbReference type="NCBI Taxonomy" id="9606"/>
    <lineage>
        <taxon>Eukaryota</taxon>
        <taxon>Metazoa</taxon>
        <taxon>Chordata</taxon>
        <taxon>Craniata</taxon>
        <taxon>Vertebrata</taxon>
        <taxon>Euteleostomi</taxon>
        <taxon>Mammalia</taxon>
        <taxon>Eutheria</taxon>
        <taxon>Euarchontoglires</taxon>
        <taxon>Primates</taxon>
        <taxon>Haplorrhini</taxon>
        <taxon>Catarrhini</taxon>
        <taxon>Hominidae</taxon>
        <taxon>Homo</taxon>
    </lineage>
</organism>